<evidence type="ECO:0000255" key="1">
    <source>
        <dbReference type="HAMAP-Rule" id="MF_01025"/>
    </source>
</evidence>
<feature type="chain" id="PRO_1000149134" description="2-isopropylmalate synthase">
    <location>
        <begin position="1"/>
        <end position="506"/>
    </location>
</feature>
<feature type="domain" description="Pyruvate carboxyltransferase" evidence="1">
    <location>
        <begin position="4"/>
        <end position="266"/>
    </location>
</feature>
<feature type="region of interest" description="Regulatory domain" evidence="1">
    <location>
        <begin position="390"/>
        <end position="506"/>
    </location>
</feature>
<feature type="binding site" evidence="1">
    <location>
        <position position="13"/>
    </location>
    <ligand>
        <name>Mn(2+)</name>
        <dbReference type="ChEBI" id="CHEBI:29035"/>
    </ligand>
</feature>
<feature type="binding site" evidence="1">
    <location>
        <position position="201"/>
    </location>
    <ligand>
        <name>Mn(2+)</name>
        <dbReference type="ChEBI" id="CHEBI:29035"/>
    </ligand>
</feature>
<feature type="binding site" evidence="1">
    <location>
        <position position="203"/>
    </location>
    <ligand>
        <name>Mn(2+)</name>
        <dbReference type="ChEBI" id="CHEBI:29035"/>
    </ligand>
</feature>
<feature type="binding site" evidence="1">
    <location>
        <position position="237"/>
    </location>
    <ligand>
        <name>Mn(2+)</name>
        <dbReference type="ChEBI" id="CHEBI:29035"/>
    </ligand>
</feature>
<gene>
    <name evidence="1" type="primary">leuA</name>
    <name type="ordered locus">BCE33L1285</name>
</gene>
<proteinExistence type="inferred from homology"/>
<reference key="1">
    <citation type="journal article" date="2006" name="J. Bacteriol.">
        <title>Pathogenomic sequence analysis of Bacillus cereus and Bacillus thuringiensis isolates closely related to Bacillus anthracis.</title>
        <authorList>
            <person name="Han C.S."/>
            <person name="Xie G."/>
            <person name="Challacombe J.F."/>
            <person name="Altherr M.R."/>
            <person name="Bhotika S.S."/>
            <person name="Bruce D."/>
            <person name="Campbell C.S."/>
            <person name="Campbell M.L."/>
            <person name="Chen J."/>
            <person name="Chertkov O."/>
            <person name="Cleland C."/>
            <person name="Dimitrijevic M."/>
            <person name="Doggett N.A."/>
            <person name="Fawcett J.J."/>
            <person name="Glavina T."/>
            <person name="Goodwin L.A."/>
            <person name="Hill K.K."/>
            <person name="Hitchcock P."/>
            <person name="Jackson P.J."/>
            <person name="Keim P."/>
            <person name="Kewalramani A.R."/>
            <person name="Longmire J."/>
            <person name="Lucas S."/>
            <person name="Malfatti S."/>
            <person name="McMurry K."/>
            <person name="Meincke L.J."/>
            <person name="Misra M."/>
            <person name="Moseman B.L."/>
            <person name="Mundt M."/>
            <person name="Munk A.C."/>
            <person name="Okinaka R.T."/>
            <person name="Parson-Quintana B."/>
            <person name="Reilly L.P."/>
            <person name="Richardson P."/>
            <person name="Robinson D.L."/>
            <person name="Rubin E."/>
            <person name="Saunders E."/>
            <person name="Tapia R."/>
            <person name="Tesmer J.G."/>
            <person name="Thayer N."/>
            <person name="Thompson L.S."/>
            <person name="Tice H."/>
            <person name="Ticknor L.O."/>
            <person name="Wills P.L."/>
            <person name="Brettin T.S."/>
            <person name="Gilna P."/>
        </authorList>
    </citation>
    <scope>NUCLEOTIDE SEQUENCE [LARGE SCALE GENOMIC DNA]</scope>
    <source>
        <strain>ZK / E33L</strain>
    </source>
</reference>
<dbReference type="EC" id="2.3.3.13" evidence="1"/>
<dbReference type="EMBL" id="CP000001">
    <property type="protein sequence ID" value="AAU18963.1"/>
    <property type="molecule type" value="Genomic_DNA"/>
</dbReference>
<dbReference type="RefSeq" id="WP_000721813.1">
    <property type="nucleotide sequence ID" value="NZ_CP009968.1"/>
</dbReference>
<dbReference type="SMR" id="Q63DX8"/>
<dbReference type="KEGG" id="bcz:BCE33L1285"/>
<dbReference type="PATRIC" id="fig|288681.22.peg.4269"/>
<dbReference type="UniPathway" id="UPA00048">
    <property type="reaction ID" value="UER00070"/>
</dbReference>
<dbReference type="Proteomes" id="UP000002612">
    <property type="component" value="Chromosome"/>
</dbReference>
<dbReference type="GO" id="GO:0005737">
    <property type="term" value="C:cytoplasm"/>
    <property type="evidence" value="ECO:0007669"/>
    <property type="project" value="UniProtKB-SubCell"/>
</dbReference>
<dbReference type="GO" id="GO:0003852">
    <property type="term" value="F:2-isopropylmalate synthase activity"/>
    <property type="evidence" value="ECO:0007669"/>
    <property type="project" value="UniProtKB-UniRule"/>
</dbReference>
<dbReference type="GO" id="GO:0003985">
    <property type="term" value="F:acetyl-CoA C-acetyltransferase activity"/>
    <property type="evidence" value="ECO:0007669"/>
    <property type="project" value="UniProtKB-UniRule"/>
</dbReference>
<dbReference type="GO" id="GO:0030145">
    <property type="term" value="F:manganese ion binding"/>
    <property type="evidence" value="ECO:0007669"/>
    <property type="project" value="UniProtKB-UniRule"/>
</dbReference>
<dbReference type="GO" id="GO:0009098">
    <property type="term" value="P:L-leucine biosynthetic process"/>
    <property type="evidence" value="ECO:0007669"/>
    <property type="project" value="UniProtKB-UniRule"/>
</dbReference>
<dbReference type="CDD" id="cd07940">
    <property type="entry name" value="DRE_TIM_IPMS"/>
    <property type="match status" value="1"/>
</dbReference>
<dbReference type="FunFam" id="1.10.238.260:FF:000001">
    <property type="entry name" value="2-isopropylmalate synthase"/>
    <property type="match status" value="1"/>
</dbReference>
<dbReference type="FunFam" id="3.20.20.70:FF:000287">
    <property type="entry name" value="2-isopropylmalate synthase"/>
    <property type="match status" value="1"/>
</dbReference>
<dbReference type="FunFam" id="3.30.160.270:FF:000003">
    <property type="entry name" value="2-isopropylmalate synthase"/>
    <property type="match status" value="1"/>
</dbReference>
<dbReference type="Gene3D" id="1.10.238.260">
    <property type="match status" value="1"/>
</dbReference>
<dbReference type="Gene3D" id="3.30.160.270">
    <property type="match status" value="1"/>
</dbReference>
<dbReference type="Gene3D" id="3.20.20.70">
    <property type="entry name" value="Aldolase class I"/>
    <property type="match status" value="1"/>
</dbReference>
<dbReference type="HAMAP" id="MF_01025">
    <property type="entry name" value="LeuA_type1"/>
    <property type="match status" value="1"/>
</dbReference>
<dbReference type="InterPro" id="IPR050073">
    <property type="entry name" value="2-IPM_HCS-like"/>
</dbReference>
<dbReference type="InterPro" id="IPR013709">
    <property type="entry name" value="2-isopropylmalate_synth_dimer"/>
</dbReference>
<dbReference type="InterPro" id="IPR002034">
    <property type="entry name" value="AIPM/Hcit_synth_CS"/>
</dbReference>
<dbReference type="InterPro" id="IPR013785">
    <property type="entry name" value="Aldolase_TIM"/>
</dbReference>
<dbReference type="InterPro" id="IPR054691">
    <property type="entry name" value="LeuA/HCS_post-cat"/>
</dbReference>
<dbReference type="InterPro" id="IPR036230">
    <property type="entry name" value="LeuA_allosteric_dom_sf"/>
</dbReference>
<dbReference type="InterPro" id="IPR005671">
    <property type="entry name" value="LeuA_bact_synth"/>
</dbReference>
<dbReference type="InterPro" id="IPR000891">
    <property type="entry name" value="PYR_CT"/>
</dbReference>
<dbReference type="NCBIfam" id="TIGR00973">
    <property type="entry name" value="leuA_bact"/>
    <property type="match status" value="1"/>
</dbReference>
<dbReference type="NCBIfam" id="NF002086">
    <property type="entry name" value="PRK00915.1-3"/>
    <property type="match status" value="1"/>
</dbReference>
<dbReference type="NCBIfam" id="NF002088">
    <property type="entry name" value="PRK00915.1-5"/>
    <property type="match status" value="1"/>
</dbReference>
<dbReference type="PANTHER" id="PTHR10277:SF9">
    <property type="entry name" value="2-ISOPROPYLMALATE SYNTHASE 1, CHLOROPLASTIC-RELATED"/>
    <property type="match status" value="1"/>
</dbReference>
<dbReference type="PANTHER" id="PTHR10277">
    <property type="entry name" value="HOMOCITRATE SYNTHASE-RELATED"/>
    <property type="match status" value="1"/>
</dbReference>
<dbReference type="Pfam" id="PF22617">
    <property type="entry name" value="HCS_D2"/>
    <property type="match status" value="1"/>
</dbReference>
<dbReference type="Pfam" id="PF00682">
    <property type="entry name" value="HMGL-like"/>
    <property type="match status" value="1"/>
</dbReference>
<dbReference type="Pfam" id="PF08502">
    <property type="entry name" value="LeuA_dimer"/>
    <property type="match status" value="1"/>
</dbReference>
<dbReference type="SMART" id="SM00917">
    <property type="entry name" value="LeuA_dimer"/>
    <property type="match status" value="1"/>
</dbReference>
<dbReference type="SUPFAM" id="SSF110921">
    <property type="entry name" value="2-isopropylmalate synthase LeuA, allosteric (dimerisation) domain"/>
    <property type="match status" value="1"/>
</dbReference>
<dbReference type="SUPFAM" id="SSF51569">
    <property type="entry name" value="Aldolase"/>
    <property type="match status" value="1"/>
</dbReference>
<dbReference type="PROSITE" id="PS00815">
    <property type="entry name" value="AIPM_HOMOCIT_SYNTH_1"/>
    <property type="match status" value="1"/>
</dbReference>
<dbReference type="PROSITE" id="PS00816">
    <property type="entry name" value="AIPM_HOMOCIT_SYNTH_2"/>
    <property type="match status" value="1"/>
</dbReference>
<dbReference type="PROSITE" id="PS50991">
    <property type="entry name" value="PYR_CT"/>
    <property type="match status" value="1"/>
</dbReference>
<accession>Q63DX8</accession>
<name>LEU1_BACCZ</name>
<sequence>MKKILFMDTTLRDGEQSPGVNLNEQEKLQIARQLERLGIHVMEAGFAAASEGDFQSVKRIANTIQNATVMSLARAKESDIRRAYEAVKGAVSPRLHVFLATSDIHMKYKLCMSKEDVLDSIYRSVTLGKSLFPTVQFSAEDATRTARDFLAEAVEVAIRAGANVINIPDTVGYTNPEEYYSLFKYLQESVPSYEKAIFSCHCHDDLGMAVANSLAAVEGGALQVEGTINGIGERAGNAALEEVAVALHIRKDFYKAEPSMTLKEIKATSTLVSRLTGMVVPKNKAIVGANAFAHESGIHQDGVLKEVTTYEIIEPALVGESQNLFVLGKHSGRHAFTEKMKELGYEFTNDERDAVFEAFKKLADRKKEITEEDLRALMLGEAAFAAQQYNITQLQVHFVSNSTQCATVVLKDEEGNVFEDAATGSGSIEAIYNAIQRILGLECELADYRIQSITQGQDALAHVHVELKEGAHQVSGFGVAQDVLEASARAYVHAAGKLKSFIQLVK</sequence>
<protein>
    <recommendedName>
        <fullName evidence="1">2-isopropylmalate synthase</fullName>
        <ecNumber evidence="1">2.3.3.13</ecNumber>
    </recommendedName>
    <alternativeName>
        <fullName evidence="1">Alpha-IPM synthase</fullName>
    </alternativeName>
    <alternativeName>
        <fullName evidence="1">Alpha-isopropylmalate synthase</fullName>
    </alternativeName>
</protein>
<keyword id="KW-0028">Amino-acid biosynthesis</keyword>
<keyword id="KW-0100">Branched-chain amino acid biosynthesis</keyword>
<keyword id="KW-0963">Cytoplasm</keyword>
<keyword id="KW-0432">Leucine biosynthesis</keyword>
<keyword id="KW-0464">Manganese</keyword>
<keyword id="KW-0479">Metal-binding</keyword>
<keyword id="KW-0808">Transferase</keyword>
<organism>
    <name type="scientific">Bacillus cereus (strain ZK / E33L)</name>
    <dbReference type="NCBI Taxonomy" id="288681"/>
    <lineage>
        <taxon>Bacteria</taxon>
        <taxon>Bacillati</taxon>
        <taxon>Bacillota</taxon>
        <taxon>Bacilli</taxon>
        <taxon>Bacillales</taxon>
        <taxon>Bacillaceae</taxon>
        <taxon>Bacillus</taxon>
        <taxon>Bacillus cereus group</taxon>
    </lineage>
</organism>
<comment type="function">
    <text evidence="1">Catalyzes the condensation of the acetyl group of acetyl-CoA with 3-methyl-2-oxobutanoate (2-ketoisovalerate) to form 3-carboxy-3-hydroxy-4-methylpentanoate (2-isopropylmalate).</text>
</comment>
<comment type="catalytic activity">
    <reaction evidence="1">
        <text>3-methyl-2-oxobutanoate + acetyl-CoA + H2O = (2S)-2-isopropylmalate + CoA + H(+)</text>
        <dbReference type="Rhea" id="RHEA:21524"/>
        <dbReference type="ChEBI" id="CHEBI:1178"/>
        <dbReference type="ChEBI" id="CHEBI:11851"/>
        <dbReference type="ChEBI" id="CHEBI:15377"/>
        <dbReference type="ChEBI" id="CHEBI:15378"/>
        <dbReference type="ChEBI" id="CHEBI:57287"/>
        <dbReference type="ChEBI" id="CHEBI:57288"/>
        <dbReference type="EC" id="2.3.3.13"/>
    </reaction>
</comment>
<comment type="cofactor">
    <cofactor evidence="1">
        <name>Mn(2+)</name>
        <dbReference type="ChEBI" id="CHEBI:29035"/>
    </cofactor>
</comment>
<comment type="pathway">
    <text evidence="1">Amino-acid biosynthesis; L-leucine biosynthesis; L-leucine from 3-methyl-2-oxobutanoate: step 1/4.</text>
</comment>
<comment type="subunit">
    <text evidence="1">Homodimer.</text>
</comment>
<comment type="subcellular location">
    <subcellularLocation>
        <location evidence="1">Cytoplasm</location>
    </subcellularLocation>
</comment>
<comment type="similarity">
    <text evidence="1">Belongs to the alpha-IPM synthase/homocitrate synthase family. LeuA type 1 subfamily.</text>
</comment>